<proteinExistence type="inferred from homology"/>
<organism>
    <name type="scientific">Alternaria alternata</name>
    <name type="common">Alternaria rot fungus</name>
    <name type="synonym">Torula alternata</name>
    <dbReference type="NCBI Taxonomy" id="5599"/>
    <lineage>
        <taxon>Eukaryota</taxon>
        <taxon>Fungi</taxon>
        <taxon>Dikarya</taxon>
        <taxon>Ascomycota</taxon>
        <taxon>Pezizomycotina</taxon>
        <taxon>Dothideomycetes</taxon>
        <taxon>Pleosporomycetidae</taxon>
        <taxon>Pleosporales</taxon>
        <taxon>Pleosporineae</taxon>
        <taxon>Pleosporaceae</taxon>
        <taxon>Alternaria</taxon>
        <taxon>Alternaria sect. Alternaria</taxon>
        <taxon>Alternaria alternata complex</taxon>
    </lineage>
</organism>
<sequence>MEPEPLDPRAIGFMRRNLAMLRQTPMSVVLAGLILLASIYFPRFMFKSQMARFPLILEHLSSEQRRARFLVGAKALYKDGSQKFRGMAYRMQTLDEQQIVLPLSALTELRKAPEEVLSFYDMFSKVVDTIKRDLTPKLTKITSKICDEVDAALDTYLPSHGKWTEINVSKTALDIIAKVSAHLFIGGDVANDPGYLECTKNFTVHLGEATRAIKVTRVWLRPFLAPRLPEVKRLLETRTKLRSYVKRVIEEREAKIKNPDWVPPDDMMQWLLDRADRQKDTLEDCTAAQVLLILGTINASMQTLIAILHTLAVTPEYVEPLREEIRNTLNSDGSIPVSAMKEFGKMDSYFKEVGMHFPVIIEPYFRRVRKGFTLSNGQYLPPGVAIVIANPLVTDSKYDTFDGFRHYKLREASAQKDKPNHRWLIANETEFRWGYDNHVCPGRFYAHNLLKIIFARIVENYDIKMPGNVEGIEARYPMVEHGNVVMEPRDKPLLLRRVKSHQGHVD</sequence>
<reference key="1">
    <citation type="journal article" date="2016" name="Toxins">
        <title>Putative nonribosomal peptide synthetase and cytochrome P450 genes responsible for tentoxin biosynthesis in Alternaria alternata ZJ33.</title>
        <authorList>
            <person name="Li Y.H."/>
            <person name="Han W.J."/>
            <person name="Gui X.W."/>
            <person name="Wei T."/>
            <person name="Tang S.Y."/>
            <person name="Jin J.M."/>
        </authorList>
    </citation>
    <scope>NUCLEOTIDE SEQUENCE [GENOMIC DNA]</scope>
    <scope>FUNCTION</scope>
    <scope>DISRUPTION PHENOTYPE</scope>
    <scope>PATHWAY</scope>
    <source>
        <strain>ZJ33</strain>
    </source>
</reference>
<reference key="2">
    <citation type="journal article" date="1994" name="Microbiology">
        <title>Studies of the biosynthesis of tentoxin by Alternaria alternata.</title>
        <authorList>
            <person name="Ramm K."/>
            <person name="Ramm M."/>
            <person name="Liebermann B."/>
            <person name="Reuter G."/>
        </authorList>
    </citation>
    <scope>FUNCTION</scope>
</reference>
<dbReference type="EC" id="1.-.-.-" evidence="8"/>
<dbReference type="EMBL" id="KT947105">
    <property type="protein sequence ID" value="AMT84998.1"/>
    <property type="molecule type" value="Genomic_DNA"/>
</dbReference>
<dbReference type="SMR" id="A0A144KPK9"/>
<dbReference type="GlyCosmos" id="A0A144KPK9">
    <property type="glycosylation" value="4 sites, No reported glycans"/>
</dbReference>
<dbReference type="VEuPathDB" id="FungiDB:CC77DRAFT_997367"/>
<dbReference type="GO" id="GO:0016020">
    <property type="term" value="C:membrane"/>
    <property type="evidence" value="ECO:0007669"/>
    <property type="project" value="UniProtKB-SubCell"/>
</dbReference>
<dbReference type="GO" id="GO:0020037">
    <property type="term" value="F:heme binding"/>
    <property type="evidence" value="ECO:0007669"/>
    <property type="project" value="InterPro"/>
</dbReference>
<dbReference type="GO" id="GO:0005506">
    <property type="term" value="F:iron ion binding"/>
    <property type="evidence" value="ECO:0007669"/>
    <property type="project" value="InterPro"/>
</dbReference>
<dbReference type="GO" id="GO:0004497">
    <property type="term" value="F:monooxygenase activity"/>
    <property type="evidence" value="ECO:0007669"/>
    <property type="project" value="UniProtKB-KW"/>
</dbReference>
<dbReference type="GO" id="GO:0016705">
    <property type="term" value="F:oxidoreductase activity, acting on paired donors, with incorporation or reduction of molecular oxygen"/>
    <property type="evidence" value="ECO:0007669"/>
    <property type="project" value="InterPro"/>
</dbReference>
<dbReference type="GO" id="GO:0019748">
    <property type="term" value="P:secondary metabolic process"/>
    <property type="evidence" value="ECO:0007669"/>
    <property type="project" value="UniProtKB-ARBA"/>
</dbReference>
<dbReference type="CDD" id="cd11041">
    <property type="entry name" value="CYP503A1-like"/>
    <property type="match status" value="1"/>
</dbReference>
<dbReference type="Gene3D" id="1.10.630.10">
    <property type="entry name" value="Cytochrome P450"/>
    <property type="match status" value="1"/>
</dbReference>
<dbReference type="InterPro" id="IPR001128">
    <property type="entry name" value="Cyt_P450"/>
</dbReference>
<dbReference type="InterPro" id="IPR036396">
    <property type="entry name" value="Cyt_P450_sf"/>
</dbReference>
<dbReference type="PANTHER" id="PTHR46206">
    <property type="entry name" value="CYTOCHROME P450"/>
    <property type="match status" value="1"/>
</dbReference>
<dbReference type="PANTHER" id="PTHR46206:SF7">
    <property type="entry name" value="P450, PUTATIVE (EUROFUNG)-RELATED"/>
    <property type="match status" value="1"/>
</dbReference>
<dbReference type="Pfam" id="PF00067">
    <property type="entry name" value="p450"/>
    <property type="match status" value="1"/>
</dbReference>
<dbReference type="SUPFAM" id="SSF48264">
    <property type="entry name" value="Cytochrome P450"/>
    <property type="match status" value="1"/>
</dbReference>
<dbReference type="PROSITE" id="PS00086">
    <property type="entry name" value="CYTOCHROME_P450"/>
    <property type="match status" value="1"/>
</dbReference>
<feature type="chain" id="PRO_0000438988" description="Cytochrome P450 monooxygenase TES1">
    <location>
        <begin position="1"/>
        <end position="506"/>
    </location>
</feature>
<feature type="transmembrane region" description="Helical" evidence="2">
    <location>
        <begin position="26"/>
        <end position="46"/>
    </location>
</feature>
<feature type="binding site" description="axial binding residue" evidence="1">
    <location>
        <position position="440"/>
    </location>
    <ligand>
        <name>heme</name>
        <dbReference type="ChEBI" id="CHEBI:30413"/>
    </ligand>
    <ligandPart>
        <name>Fe</name>
        <dbReference type="ChEBI" id="CHEBI:18248"/>
    </ligandPart>
</feature>
<feature type="glycosylation site" description="N-linked (GlcNAc...) asparagine" evidence="3">
    <location>
        <position position="167"/>
    </location>
</feature>
<feature type="glycosylation site" description="N-linked (GlcNAc...) asparagine" evidence="3">
    <location>
        <position position="201"/>
    </location>
</feature>
<feature type="glycosylation site" description="N-linked (GlcNAc...) asparagine" evidence="3">
    <location>
        <position position="298"/>
    </location>
</feature>
<feature type="glycosylation site" description="N-linked (GlcNAc...) asparagine" evidence="3">
    <location>
        <position position="427"/>
    </location>
</feature>
<comment type="function">
    <text evidence="4 5">Cytochrome P450 monooxygenase; part of the gene cluster that mediates the biosynthesis of the phytotoxin tentoxin, an inhibitor the F1-ATPase activity of chloroplasts, resulting in chlorosis in sensitive plants (PubMed:27490569, PubMed:7881545). Tentoxin is a cyclic tetrapeptide that consists of four amino acid residues: glycine (Gly), alanine (Ala), leucine (Leu), and dehydrophenylalanine (DPhe) (PubMed:27490569, PubMed:7881545). In addition, both the Ala and DPhe residues are N-methylated (PubMed:27490569, PubMed:7881545). The nonribosomal peptide synthetase TES assembles tentoxin from the four substrate amino acids (PubMed:27490569). The adenylation domains of each of the 4 modules are responsible for the activation of Gly, Ala, Leu and DPhe, respectively (PubMed:27490569). In addition, the N-methyltransferase domains in the second and fourth modules of TES could be responsible for N-methylation of Ala and DPhe residues (PubMed:27490569). Finally, the condensation domain located in the termination module probably catalyzes the formation of the intramolecular macrocyclization and then the release of tentoxin (PubMed:27490569). The cytochrome P450 monooxygenase TES1 is predicted to be involved in the formation of DPhe (PubMed:27490569).</text>
</comment>
<comment type="cofactor">
    <cofactor evidence="1">
        <name>heme</name>
        <dbReference type="ChEBI" id="CHEBI:30413"/>
    </cofactor>
</comment>
<comment type="pathway">
    <text evidence="4">Phytotoxin biosynthesis.</text>
</comment>
<comment type="subcellular location">
    <subcellularLocation>
        <location evidence="2">Membrane</location>
        <topology evidence="2">Single-pass membrane protein</topology>
    </subcellularLocation>
</comment>
<comment type="disruption phenotype">
    <text evidence="4">Impairs the production of tentoxin (PubMed:27490569).</text>
</comment>
<comment type="similarity">
    <text evidence="7">Belongs to the cytochrome P450 family.</text>
</comment>
<evidence type="ECO:0000250" key="1">
    <source>
        <dbReference type="UniProtKB" id="P04798"/>
    </source>
</evidence>
<evidence type="ECO:0000255" key="2"/>
<evidence type="ECO:0000255" key="3">
    <source>
        <dbReference type="PROSITE-ProRule" id="PRU00498"/>
    </source>
</evidence>
<evidence type="ECO:0000269" key="4">
    <source>
    </source>
</evidence>
<evidence type="ECO:0000269" key="5">
    <source>
    </source>
</evidence>
<evidence type="ECO:0000303" key="6">
    <source>
    </source>
</evidence>
<evidence type="ECO:0000305" key="7"/>
<evidence type="ECO:0000305" key="8">
    <source>
    </source>
</evidence>
<protein>
    <recommendedName>
        <fullName evidence="6">Cytochrome P450 monooxygenase TES1</fullName>
        <ecNumber evidence="8">1.-.-.-</ecNumber>
    </recommendedName>
    <alternativeName>
        <fullName evidence="6">Tentoxin synthesis protein 1</fullName>
    </alternativeName>
</protein>
<gene>
    <name evidence="6" type="primary">TES1</name>
</gene>
<keyword id="KW-0325">Glycoprotein</keyword>
<keyword id="KW-0349">Heme</keyword>
<keyword id="KW-0408">Iron</keyword>
<keyword id="KW-0472">Membrane</keyword>
<keyword id="KW-0479">Metal-binding</keyword>
<keyword id="KW-0503">Monooxygenase</keyword>
<keyword id="KW-0560">Oxidoreductase</keyword>
<keyword id="KW-0812">Transmembrane</keyword>
<keyword id="KW-1133">Transmembrane helix</keyword>
<accession>A0A144KPK9</accession>
<name>TES1_ALTAL</name>